<gene>
    <name evidence="1" type="primary">plsY</name>
    <name type="ordered locus">llmg_1540</name>
</gene>
<comment type="function">
    <text evidence="1">Catalyzes the transfer of an acyl group from acyl-phosphate (acyl-PO(4)) to glycerol-3-phosphate (G3P) to form lysophosphatidic acid (LPA). This enzyme utilizes acyl-phosphate as fatty acyl donor, but not acyl-CoA or acyl-ACP.</text>
</comment>
<comment type="catalytic activity">
    <reaction evidence="1">
        <text>an acyl phosphate + sn-glycerol 3-phosphate = a 1-acyl-sn-glycero-3-phosphate + phosphate</text>
        <dbReference type="Rhea" id="RHEA:34075"/>
        <dbReference type="ChEBI" id="CHEBI:43474"/>
        <dbReference type="ChEBI" id="CHEBI:57597"/>
        <dbReference type="ChEBI" id="CHEBI:57970"/>
        <dbReference type="ChEBI" id="CHEBI:59918"/>
        <dbReference type="EC" id="2.3.1.275"/>
    </reaction>
</comment>
<comment type="pathway">
    <text evidence="1">Lipid metabolism; phospholipid metabolism.</text>
</comment>
<comment type="subunit">
    <text evidence="1">Probably interacts with PlsX.</text>
</comment>
<comment type="subcellular location">
    <subcellularLocation>
        <location evidence="1">Cell membrane</location>
        <topology evidence="1">Multi-pass membrane protein</topology>
    </subcellularLocation>
</comment>
<comment type="similarity">
    <text evidence="1">Belongs to the PlsY family.</text>
</comment>
<feature type="chain" id="PRO_1000064189" description="Glycerol-3-phosphate acyltransferase">
    <location>
        <begin position="1"/>
        <end position="213"/>
    </location>
</feature>
<feature type="transmembrane region" description="Helical" evidence="1">
    <location>
        <begin position="3"/>
        <end position="23"/>
    </location>
</feature>
<feature type="transmembrane region" description="Helical" evidence="1">
    <location>
        <begin position="48"/>
        <end position="68"/>
    </location>
</feature>
<feature type="transmembrane region" description="Helical" evidence="1">
    <location>
        <begin position="71"/>
        <end position="91"/>
    </location>
</feature>
<feature type="transmembrane region" description="Helical" evidence="1">
    <location>
        <begin position="119"/>
        <end position="139"/>
    </location>
</feature>
<feature type="transmembrane region" description="Helical" evidence="1">
    <location>
        <begin position="144"/>
        <end position="164"/>
    </location>
</feature>
<feature type="transmembrane region" description="Helical" evidence="1">
    <location>
        <begin position="165"/>
        <end position="185"/>
    </location>
</feature>
<reference key="1">
    <citation type="journal article" date="2007" name="J. Bacteriol.">
        <title>The complete genome sequence of the lactic acid bacterial paradigm Lactococcus lactis subsp. cremoris MG1363.</title>
        <authorList>
            <person name="Wegmann U."/>
            <person name="O'Connell-Motherway M."/>
            <person name="Zomer A."/>
            <person name="Buist G."/>
            <person name="Shearman C."/>
            <person name="Canchaya C."/>
            <person name="Ventura M."/>
            <person name="Goesmann A."/>
            <person name="Gasson M.J."/>
            <person name="Kuipers O.P."/>
            <person name="van Sinderen D."/>
            <person name="Kok J."/>
        </authorList>
    </citation>
    <scope>NUCLEOTIDE SEQUENCE [LARGE SCALE GENOMIC DNA]</scope>
    <source>
        <strain>MG1363</strain>
    </source>
</reference>
<dbReference type="EC" id="2.3.1.275" evidence="1"/>
<dbReference type="EMBL" id="AM406671">
    <property type="protein sequence ID" value="CAL98115.1"/>
    <property type="molecule type" value="Genomic_DNA"/>
</dbReference>
<dbReference type="RefSeq" id="WP_011835381.1">
    <property type="nucleotide sequence ID" value="NC_009004.1"/>
</dbReference>
<dbReference type="SMR" id="A2RLE8"/>
<dbReference type="STRING" id="416870.llmg_1540"/>
<dbReference type="KEGG" id="llm:llmg_1540"/>
<dbReference type="eggNOG" id="COG0344">
    <property type="taxonomic scope" value="Bacteria"/>
</dbReference>
<dbReference type="HOGENOM" id="CLU_081254_4_0_9"/>
<dbReference type="OrthoDB" id="9777124at2"/>
<dbReference type="PhylomeDB" id="A2RLE8"/>
<dbReference type="UniPathway" id="UPA00085"/>
<dbReference type="Proteomes" id="UP000000364">
    <property type="component" value="Chromosome"/>
</dbReference>
<dbReference type="GO" id="GO:0005886">
    <property type="term" value="C:plasma membrane"/>
    <property type="evidence" value="ECO:0007669"/>
    <property type="project" value="UniProtKB-SubCell"/>
</dbReference>
<dbReference type="GO" id="GO:0043772">
    <property type="term" value="F:acyl-phosphate glycerol-3-phosphate acyltransferase activity"/>
    <property type="evidence" value="ECO:0007669"/>
    <property type="project" value="UniProtKB-UniRule"/>
</dbReference>
<dbReference type="GO" id="GO:0008654">
    <property type="term" value="P:phospholipid biosynthetic process"/>
    <property type="evidence" value="ECO:0007669"/>
    <property type="project" value="UniProtKB-UniRule"/>
</dbReference>
<dbReference type="HAMAP" id="MF_01043">
    <property type="entry name" value="PlsY"/>
    <property type="match status" value="1"/>
</dbReference>
<dbReference type="InterPro" id="IPR003811">
    <property type="entry name" value="G3P_acylTferase_PlsY"/>
</dbReference>
<dbReference type="NCBIfam" id="TIGR00023">
    <property type="entry name" value="glycerol-3-phosphate 1-O-acyltransferase PlsY"/>
    <property type="match status" value="1"/>
</dbReference>
<dbReference type="PANTHER" id="PTHR30309:SF0">
    <property type="entry name" value="GLYCEROL-3-PHOSPHATE ACYLTRANSFERASE-RELATED"/>
    <property type="match status" value="1"/>
</dbReference>
<dbReference type="PANTHER" id="PTHR30309">
    <property type="entry name" value="INNER MEMBRANE PROTEIN YGIH"/>
    <property type="match status" value="1"/>
</dbReference>
<dbReference type="Pfam" id="PF02660">
    <property type="entry name" value="G3P_acyltransf"/>
    <property type="match status" value="1"/>
</dbReference>
<dbReference type="SMART" id="SM01207">
    <property type="entry name" value="G3P_acyltransf"/>
    <property type="match status" value="1"/>
</dbReference>
<keyword id="KW-1003">Cell membrane</keyword>
<keyword id="KW-0444">Lipid biosynthesis</keyword>
<keyword id="KW-0443">Lipid metabolism</keyword>
<keyword id="KW-0472">Membrane</keyword>
<keyword id="KW-0594">Phospholipid biosynthesis</keyword>
<keyword id="KW-1208">Phospholipid metabolism</keyword>
<keyword id="KW-0808">Transferase</keyword>
<keyword id="KW-0812">Transmembrane</keyword>
<keyword id="KW-1133">Transmembrane helix</keyword>
<organism>
    <name type="scientific">Lactococcus lactis subsp. cremoris (strain MG1363)</name>
    <dbReference type="NCBI Taxonomy" id="416870"/>
    <lineage>
        <taxon>Bacteria</taxon>
        <taxon>Bacillati</taxon>
        <taxon>Bacillota</taxon>
        <taxon>Bacilli</taxon>
        <taxon>Lactobacillales</taxon>
        <taxon>Streptococcaceae</taxon>
        <taxon>Lactococcus</taxon>
        <taxon>Lactococcus cremoris subsp. cremoris</taxon>
    </lineage>
</organism>
<accession>A2RLE8</accession>
<sequence>MLIIILLLIASYLLGAIPFGLWIGKIFFKKNLHDYGSGNTGTTNTFRILGVKAGIAVFIFDLLKGTLATLLPLIFHINGVSPLIFGLLAVIGHTLSIFDHFKGGKAVATSAGVVLGFSPFFLLYLLVIFILVLWLFSMISLSSVVAAIFALLGILIFPSFGFILTSYDLLFSIIIFALAIIIIFRHKTNLKRIKNHCESLVPFGLNLSRQKEK</sequence>
<name>PLSY_LACLM</name>
<proteinExistence type="inferred from homology"/>
<protein>
    <recommendedName>
        <fullName evidence="1">Glycerol-3-phosphate acyltransferase</fullName>
    </recommendedName>
    <alternativeName>
        <fullName evidence="1">Acyl-PO4 G3P acyltransferase</fullName>
    </alternativeName>
    <alternativeName>
        <fullName evidence="1">Acyl-phosphate--glycerol-3-phosphate acyltransferase</fullName>
    </alternativeName>
    <alternativeName>
        <fullName evidence="1">G3P acyltransferase</fullName>
        <shortName evidence="1">GPAT</shortName>
        <ecNumber evidence="1">2.3.1.275</ecNumber>
    </alternativeName>
    <alternativeName>
        <fullName evidence="1">Lysophosphatidic acid synthase</fullName>
        <shortName evidence="1">LPA synthase</shortName>
    </alternativeName>
</protein>
<evidence type="ECO:0000255" key="1">
    <source>
        <dbReference type="HAMAP-Rule" id="MF_01043"/>
    </source>
</evidence>